<accession>P58236</accession>
<dbReference type="EMBL" id="BA000022">
    <property type="protein sequence ID" value="BAB61867.1"/>
    <property type="molecule type" value="Genomic_DNA"/>
</dbReference>
<dbReference type="SMR" id="P58236"/>
<dbReference type="STRING" id="1148.gene:10499352"/>
<dbReference type="PaxDb" id="1148-14595113"/>
<dbReference type="EnsemblBacteria" id="BAB61867">
    <property type="protein sequence ID" value="BAB61867"/>
    <property type="gene ID" value="BAB61867"/>
</dbReference>
<dbReference type="KEGG" id="syn:ssr0761"/>
<dbReference type="eggNOG" id="COG2161">
    <property type="taxonomic scope" value="Bacteria"/>
</dbReference>
<dbReference type="InParanoid" id="P58236"/>
<dbReference type="PhylomeDB" id="P58236"/>
<dbReference type="Proteomes" id="UP000001425">
    <property type="component" value="Chromosome"/>
</dbReference>
<dbReference type="GO" id="GO:0003700">
    <property type="term" value="F:DNA-binding transcription factor activity"/>
    <property type="evidence" value="ECO:0000318"/>
    <property type="project" value="GO_Central"/>
</dbReference>
<dbReference type="GO" id="GO:0043565">
    <property type="term" value="F:sequence-specific DNA binding"/>
    <property type="evidence" value="ECO:0000318"/>
    <property type="project" value="GO_Central"/>
</dbReference>
<dbReference type="GO" id="GO:0006355">
    <property type="term" value="P:regulation of DNA-templated transcription"/>
    <property type="evidence" value="ECO:0000318"/>
    <property type="project" value="GO_Central"/>
</dbReference>
<dbReference type="Gene3D" id="1.10.1220.170">
    <property type="match status" value="1"/>
</dbReference>
<dbReference type="Gene3D" id="3.40.1620.10">
    <property type="entry name" value="YefM-like domain"/>
    <property type="match status" value="1"/>
</dbReference>
<dbReference type="InterPro" id="IPR006442">
    <property type="entry name" value="Antitoxin_Phd/YefM"/>
</dbReference>
<dbReference type="InterPro" id="IPR051405">
    <property type="entry name" value="phD/YefM_antitoxin"/>
</dbReference>
<dbReference type="InterPro" id="IPR036165">
    <property type="entry name" value="YefM-like_sf"/>
</dbReference>
<dbReference type="NCBIfam" id="TIGR01552">
    <property type="entry name" value="phd_fam"/>
    <property type="match status" value="1"/>
</dbReference>
<dbReference type="PANTHER" id="PTHR33713">
    <property type="entry name" value="ANTITOXIN YAFN-RELATED"/>
    <property type="match status" value="1"/>
</dbReference>
<dbReference type="PANTHER" id="PTHR33713:SF6">
    <property type="entry name" value="ANTITOXIN YEFM"/>
    <property type="match status" value="1"/>
</dbReference>
<dbReference type="Pfam" id="PF02604">
    <property type="entry name" value="PhdYeFM_antitox"/>
    <property type="match status" value="1"/>
</dbReference>
<dbReference type="SUPFAM" id="SSF143120">
    <property type="entry name" value="YefM-like"/>
    <property type="match status" value="1"/>
</dbReference>
<name>Y761_SYNY3</name>
<protein>
    <recommendedName>
        <fullName>Uncharacterized protein ssr0761</fullName>
    </recommendedName>
</protein>
<feature type="chain" id="PRO_0000157875" description="Uncharacterized protein ssr0761">
    <location>
        <begin position="1"/>
        <end position="94"/>
    </location>
</feature>
<reference key="1">
    <citation type="journal article" date="1995" name="DNA Res.">
        <title>Sequence analysis of the genome of the unicellular cyanobacterium Synechocystis sp. strain PCC6803. I. Sequence features in the 1 Mb region from map positions 64% to 92% of the genome.</title>
        <authorList>
            <person name="Kaneko T."/>
            <person name="Tanaka A."/>
            <person name="Sato S."/>
            <person name="Kotani H."/>
            <person name="Sazuka T."/>
            <person name="Miyajima N."/>
            <person name="Sugiura M."/>
            <person name="Tabata S."/>
        </authorList>
    </citation>
    <scope>NUCLEOTIDE SEQUENCE [LARGE SCALE GENOMIC DNA]</scope>
    <source>
        <strain>ATCC 27184 / PCC 6803 / N-1</strain>
    </source>
</reference>
<reference key="2">
    <citation type="journal article" date="1996" name="DNA Res.">
        <title>Sequence analysis of the genome of the unicellular cyanobacterium Synechocystis sp. strain PCC6803. II. Sequence determination of the entire genome and assignment of potential protein-coding regions.</title>
        <authorList>
            <person name="Kaneko T."/>
            <person name="Sato S."/>
            <person name="Kotani H."/>
            <person name="Tanaka A."/>
            <person name="Asamizu E."/>
            <person name="Nakamura Y."/>
            <person name="Miyajima N."/>
            <person name="Hirosawa M."/>
            <person name="Sugiura M."/>
            <person name="Sasamoto S."/>
            <person name="Kimura T."/>
            <person name="Hosouchi T."/>
            <person name="Matsuno A."/>
            <person name="Muraki A."/>
            <person name="Nakazaki N."/>
            <person name="Naruo K."/>
            <person name="Okumura S."/>
            <person name="Shimpo S."/>
            <person name="Takeuchi C."/>
            <person name="Wada T."/>
            <person name="Watanabe A."/>
            <person name="Yamada M."/>
            <person name="Yasuda M."/>
            <person name="Tabata S."/>
        </authorList>
    </citation>
    <scope>NUCLEOTIDE SEQUENCE [LARGE SCALE GENOMIC DNA]</scope>
    <source>
        <strain>ATCC 27184 / PCC 6803 / Kazusa</strain>
    </source>
</reference>
<keyword id="KW-1185">Reference proteome</keyword>
<gene>
    <name type="ordered locus">ssr0761</name>
</gene>
<evidence type="ECO:0000305" key="1"/>
<proteinExistence type="inferred from homology"/>
<sequence>MGETLPQQLPNMNAVSQIIAQQKLAAIMEQVCSDHVPTIITRDTQPSVVMISLEDYQSLEETAYLLRSPNNAQKLMSAIKQLENDQGVERELLE</sequence>
<organism>
    <name type="scientific">Synechocystis sp. (strain ATCC 27184 / PCC 6803 / Kazusa)</name>
    <dbReference type="NCBI Taxonomy" id="1111708"/>
    <lineage>
        <taxon>Bacteria</taxon>
        <taxon>Bacillati</taxon>
        <taxon>Cyanobacteriota</taxon>
        <taxon>Cyanophyceae</taxon>
        <taxon>Synechococcales</taxon>
        <taxon>Merismopediaceae</taxon>
        <taxon>Synechocystis</taxon>
    </lineage>
</organism>
<comment type="similarity">
    <text evidence="1">Belongs to the phD/YefM antitoxin family.</text>
</comment>